<proteinExistence type="evidence at protein level"/>
<feature type="chain" id="PRO_0000456921" description="Flavonoid 8-O-methyltransferase 1">
    <location>
        <begin position="1"/>
        <end position="359"/>
    </location>
</feature>
<feature type="active site" description="Proton acceptor" evidence="2">
    <location>
        <position position="261"/>
    </location>
</feature>
<feature type="binding site" evidence="2">
    <location>
        <position position="223"/>
    </location>
    <ligand>
        <name>S-adenosyl-L-methionine</name>
        <dbReference type="ChEBI" id="CHEBI:59789"/>
    </ligand>
</feature>
<comment type="function">
    <text evidence="3">Cation-independent flavonoid 8-O-methyltransferase involved in the biosynthesis of polymethoxylated flavonoids natural products such as nevadensin and salvigenin, aroma compounds which contribute to the flavor of sweet basil, and exhibit pharmacological activities such as anti-allergic, anti-oxidant, antibacterial, anti-proliferative, and anti-inflammatory effects (PubMed:23747095). Catalyzes S-adenosylmethionine-dependent regioselective 8-O-methylation of flavonoids; mediates likely the conversion of pilosin (PIL) to nevadensin (NEV) and of 8-hydroxysalvigenin (8-OH-SALV) to gardenin B (GARD B) (PubMed:23747095). Can also use 3',4',7,8-tetrahydroxyflavone as substrate (PubMed:23747095). Accepts other unnatural O-diphenols including 7,8,4'-trihydroxy-flavone and 7-O-methyl-8-hydroxy-flavone, and, with a lower efficiency, 7,8-dihydroxy-flavone, as substrates (PubMed:23747095).</text>
</comment>
<comment type="catalytic activity">
    <reaction evidence="3">
        <text>an 8-hydroxyflavone + S-adenosyl-L-methionine = an 8-methoxyflavone + S-adenosyl-L-homocysteine + H(+)</text>
        <dbReference type="Rhea" id="RHEA:73495"/>
        <dbReference type="ChEBI" id="CHEBI:15378"/>
        <dbReference type="ChEBI" id="CHEBI:57856"/>
        <dbReference type="ChEBI" id="CHEBI:59789"/>
        <dbReference type="ChEBI" id="CHEBI:192819"/>
        <dbReference type="ChEBI" id="CHEBI:192820"/>
    </reaction>
    <physiologicalReaction direction="left-to-right" evidence="3">
        <dbReference type="Rhea" id="RHEA:73496"/>
    </physiologicalReaction>
</comment>
<comment type="catalytic activity">
    <reaction evidence="3">
        <text>4',7,8-trihydroxyflavone + S-adenosyl-L-methionine = 4',7-dihydroxy-8-methoxyflavone + S-adenosyl-L-homocysteine + H(+)</text>
        <dbReference type="Rhea" id="RHEA:73135"/>
        <dbReference type="ChEBI" id="CHEBI:15378"/>
        <dbReference type="ChEBI" id="CHEBI:57856"/>
        <dbReference type="ChEBI" id="CHEBI:59789"/>
        <dbReference type="ChEBI" id="CHEBI:192709"/>
        <dbReference type="ChEBI" id="CHEBI:192765"/>
    </reaction>
    <physiologicalReaction direction="left-to-right" evidence="3">
        <dbReference type="Rhea" id="RHEA:73136"/>
    </physiologicalReaction>
</comment>
<comment type="catalytic activity">
    <reaction evidence="3">
        <text>7,8-dihydroxyflavone + S-adenosyl-L-methionine = 7-hydroxy-8-methoxyflavone + S-adenosyl-L-homocysteine + H(+)</text>
        <dbReference type="Rhea" id="RHEA:73507"/>
        <dbReference type="ChEBI" id="CHEBI:15378"/>
        <dbReference type="ChEBI" id="CHEBI:57856"/>
        <dbReference type="ChEBI" id="CHEBI:59789"/>
        <dbReference type="ChEBI" id="CHEBI:192827"/>
        <dbReference type="ChEBI" id="CHEBI:192828"/>
    </reaction>
    <physiologicalReaction direction="left-to-right" evidence="3">
        <dbReference type="Rhea" id="RHEA:73508"/>
    </physiologicalReaction>
</comment>
<comment type="catalytic activity">
    <reaction evidence="3">
        <text>3',4',7,8-tetrahydroxyflavone + S-adenosyl-L-methionine = 3',4,7-trihydroxy-8-methoxyflavone + S-adenosyl-L-homocysteine + H(+)</text>
        <dbReference type="Rhea" id="RHEA:73503"/>
        <dbReference type="ChEBI" id="CHEBI:15378"/>
        <dbReference type="ChEBI" id="CHEBI:57856"/>
        <dbReference type="ChEBI" id="CHEBI:59789"/>
        <dbReference type="ChEBI" id="CHEBI:192774"/>
        <dbReference type="ChEBI" id="CHEBI:192826"/>
    </reaction>
    <physiologicalReaction direction="left-to-right" evidence="3">
        <dbReference type="Rhea" id="RHEA:73504"/>
    </physiologicalReaction>
</comment>
<comment type="activity regulation">
    <text evidence="3">Strongly inhibited by gardenin B (GARD B).</text>
</comment>
<comment type="biophysicochemical properties">
    <kinetics>
        <KM evidence="3">4.69 uM for 7,8,4'-trihydroxy-flavone (in the presence of S-adenosyl-L-methionine)</KM>
        <KM evidence="3">7.82 uM for 7-O-methyl-8-hydroxy-flavone (in the presence of S-adenosyl-L-methionine)</KM>
        <KM evidence="3">6.99 uM for 7,8-dihydroxy-flavone (in the presence of S-adenosyl-L-methionine)</KM>
        <KM evidence="3">1.78 uM for S-adenosyl-L-methionine (in the presence of 7,8,4'-trihydroxy-flavone)</KM>
        <Vmax evidence="3">0.39 nmol/sec/mg enzyme with 7,8,4'-trihydroxy-flavone as substrate (in the presence of S-adenosyl-L-methionine)</Vmax>
        <Vmax evidence="3">0.25 nmol/sec/mg enzyme with 7-O-methyl-8-hydroxy-flavone as substrate (in the presence of S-adenosyl-L-methionine)</Vmax>
        <Vmax evidence="3">0.11 nmol/sec/mg enzyme with 7,8-dihydroxy-flavone as substrate (in the presence of S-adenosyl-L-methionine)</Vmax>
        <Vmax evidence="3">0.41 nmol/sec/mg enzyme with S-adenosyl-L-methionine as substrate (in the presence of 7,8,4'-trihydroxy-flavone)</Vmax>
        <text evidence="3">kcat is 16.71 sec(-1) with 7,8,4'-trihydroxy-flavone as substrate (in the presence of S-adenosyl-L-methionine) (PubMed:23747095). kcat is 10.75 sec(-1) with 7-O-methyl-8-hydroxy-flavone as substrate (in the presence of S-adenosyl-L-methionine) (PubMed:23747095). kcat is 4.61 sec(-1) with 7,8-dihydroxy-flavone as substrate (in the presence of S-adenosyl-L-methionine) (PubMed:23747095). kcat is 17.79 sec(-1) with S-adenosyl-L-methionine as substrate (in the presence of 7,8,4'-trihydroxy-flavone) (PubMed:23747095).</text>
    </kinetics>
</comment>
<comment type="pathway">
    <text evidence="6">Flavonoid metabolism.</text>
</comment>
<comment type="tissue specificity">
    <text evidence="3">Expressed in leaves and trichomes, especially in cv. SD and cv. EMX-1, but barely in cv. MC and cv. SW.</text>
</comment>
<comment type="biotechnology">
    <text evidence="4">Nevadensin is a selective inhibitor of human carboxylesterase 1 (hCE-1), a key enzyme responsible for the hydrolysis of a wide range of endogenous and xenobiotic esters.</text>
</comment>
<comment type="similarity">
    <text evidence="2">Belongs to the class I-like SAM-binding methyltransferase superfamily. Cation-independent O-methyltransferase family.</text>
</comment>
<dbReference type="EC" id="2.1.1.-" evidence="1 3 7"/>
<dbReference type="EMBL" id="KC354402">
    <property type="protein sequence ID" value="AGQ21572.1"/>
    <property type="molecule type" value="mRNA"/>
</dbReference>
<dbReference type="SMR" id="S5DWK8"/>
<dbReference type="GO" id="GO:0008171">
    <property type="term" value="F:O-methyltransferase activity"/>
    <property type="evidence" value="ECO:0007669"/>
    <property type="project" value="InterPro"/>
</dbReference>
<dbReference type="GO" id="GO:0046983">
    <property type="term" value="F:protein dimerization activity"/>
    <property type="evidence" value="ECO:0007669"/>
    <property type="project" value="InterPro"/>
</dbReference>
<dbReference type="GO" id="GO:0032259">
    <property type="term" value="P:methylation"/>
    <property type="evidence" value="ECO:0007669"/>
    <property type="project" value="UniProtKB-KW"/>
</dbReference>
<dbReference type="FunFam" id="1.10.10.10:FF:000213">
    <property type="entry name" value="Coniferyl alcohol 9-O-methyltransferase"/>
    <property type="match status" value="1"/>
</dbReference>
<dbReference type="FunFam" id="3.40.50.150:FF:000057">
    <property type="entry name" value="O-methyltransferase ZRP4"/>
    <property type="match status" value="1"/>
</dbReference>
<dbReference type="Gene3D" id="3.40.50.150">
    <property type="entry name" value="Vaccinia Virus protein VP39"/>
    <property type="match status" value="1"/>
</dbReference>
<dbReference type="Gene3D" id="1.10.10.10">
    <property type="entry name" value="Winged helix-like DNA-binding domain superfamily/Winged helix DNA-binding domain"/>
    <property type="match status" value="1"/>
</dbReference>
<dbReference type="InterPro" id="IPR016461">
    <property type="entry name" value="COMT-like"/>
</dbReference>
<dbReference type="InterPro" id="IPR001077">
    <property type="entry name" value="O_MeTrfase_dom"/>
</dbReference>
<dbReference type="InterPro" id="IPR012967">
    <property type="entry name" value="Plant_O-MeTrfase_dimerisation"/>
</dbReference>
<dbReference type="InterPro" id="IPR029063">
    <property type="entry name" value="SAM-dependent_MTases_sf"/>
</dbReference>
<dbReference type="InterPro" id="IPR036388">
    <property type="entry name" value="WH-like_DNA-bd_sf"/>
</dbReference>
<dbReference type="InterPro" id="IPR036390">
    <property type="entry name" value="WH_DNA-bd_sf"/>
</dbReference>
<dbReference type="PANTHER" id="PTHR11746">
    <property type="entry name" value="O-METHYLTRANSFERASE"/>
    <property type="match status" value="1"/>
</dbReference>
<dbReference type="Pfam" id="PF08100">
    <property type="entry name" value="Dimerisation"/>
    <property type="match status" value="1"/>
</dbReference>
<dbReference type="Pfam" id="PF00891">
    <property type="entry name" value="Methyltransf_2"/>
    <property type="match status" value="1"/>
</dbReference>
<dbReference type="PIRSF" id="PIRSF005739">
    <property type="entry name" value="O-mtase"/>
    <property type="match status" value="1"/>
</dbReference>
<dbReference type="SUPFAM" id="SSF53335">
    <property type="entry name" value="S-adenosyl-L-methionine-dependent methyltransferases"/>
    <property type="match status" value="1"/>
</dbReference>
<dbReference type="SUPFAM" id="SSF46785">
    <property type="entry name" value="Winged helix' DNA-binding domain"/>
    <property type="match status" value="1"/>
</dbReference>
<dbReference type="PROSITE" id="PS51683">
    <property type="entry name" value="SAM_OMT_II"/>
    <property type="match status" value="1"/>
</dbReference>
<name>F8MT1_OCIBA</name>
<evidence type="ECO:0000255" key="1">
    <source>
        <dbReference type="PROSITE-ProRule" id="PRU01019"/>
    </source>
</evidence>
<evidence type="ECO:0000255" key="2">
    <source>
        <dbReference type="PROSITE-ProRule" id="PRU01020"/>
    </source>
</evidence>
<evidence type="ECO:0000269" key="3">
    <source>
    </source>
</evidence>
<evidence type="ECO:0000269" key="4">
    <source>
    </source>
</evidence>
<evidence type="ECO:0000303" key="5">
    <source>
    </source>
</evidence>
<evidence type="ECO:0000303" key="6">
    <source>
    </source>
</evidence>
<evidence type="ECO:0000305" key="7">
    <source>
    </source>
</evidence>
<organism>
    <name type="scientific">Ocimum basilicum</name>
    <name type="common">Sweet basil</name>
    <dbReference type="NCBI Taxonomy" id="39350"/>
    <lineage>
        <taxon>Eukaryota</taxon>
        <taxon>Viridiplantae</taxon>
        <taxon>Streptophyta</taxon>
        <taxon>Embryophyta</taxon>
        <taxon>Tracheophyta</taxon>
        <taxon>Spermatophyta</taxon>
        <taxon>Magnoliopsida</taxon>
        <taxon>eudicotyledons</taxon>
        <taxon>Gunneridae</taxon>
        <taxon>Pentapetalae</taxon>
        <taxon>asterids</taxon>
        <taxon>lamiids</taxon>
        <taxon>Lamiales</taxon>
        <taxon>Lamiaceae</taxon>
        <taxon>Nepetoideae</taxon>
        <taxon>Ocimeae</taxon>
        <taxon>Ociminae</taxon>
        <taxon>Ocimum</taxon>
    </lineage>
</organism>
<sequence length="359" mass="40510">MPSSSGVDSTQELLDAQAHIWNHIFNHINSMTLKWAVQLGIPDIIHKHDKPMTLSQLADAIPINRAKSDALHRIMRILVHSKFFDRVRTLPNEEEAYCLTRASRLLLRDEPLSLTPFALAVLDEDLMGTFHCVPEWFGNECPSPLEFKHEKSIREFAENNQRWSLLFNEGMANDARLVGSILAKESRKVFEGLETMVDVGGGTGMVSKAIVDAFPGMKGIVLDLPYVVSGLKGSGNLRYVGGDMFHSVPPADAVFLKWILHNWSDDECIKILEKCKEAITTSKNMKGGKVIIVDMILGYEKQQDEAVETQLFFDMMMMTTLTGKERTEQEWAKIFFAAGFKTYKIYPLLGLRSLIEVFP</sequence>
<gene>
    <name evidence="5" type="primary">F8OMT-1</name>
</gene>
<accession>S5DWK8</accession>
<keyword id="KW-0489">Methyltransferase</keyword>
<keyword id="KW-0949">S-adenosyl-L-methionine</keyword>
<keyword id="KW-0808">Transferase</keyword>
<reference key="1">
    <citation type="journal article" date="2013" name="Phytochemistry">
        <title>Characterization of two candidate flavone 8-O-methyltransferases suggests the existence of two potential routes to nevadensin in sweet basil.</title>
        <authorList>
            <person name="Berim A."/>
            <person name="Gang D.R."/>
        </authorList>
    </citation>
    <scope>NUCLEOTIDE SEQUENCE [MRNA]</scope>
    <scope>FUNCTION</scope>
    <scope>CATALYTIC ACTIVITY</scope>
    <scope>TISSUE SPECIFICITY</scope>
    <scope>BIOPHYSICOCHEMICAL PROPERTIES</scope>
    <scope>ACTIVITY REGULATION</scope>
    <source>
        <strain>cv. EMX-1</strain>
        <strain>cv. MC</strain>
        <strain>cv. SD</strain>
        <strain>cv. SW</strain>
        <tissue>Peltate glandular trichome</tissue>
    </source>
</reference>
<reference key="2">
    <citation type="journal article" date="2018" name="Int. J. Biol. Macromol.">
        <title>Nevadensin is a naturally occurring selective inhibitor of human carboxylesterase 1.</title>
        <authorList>
            <person name="Wang Y.-Q."/>
            <person name="Weng Z.-M."/>
            <person name="Dou T.-Y."/>
            <person name="Hou J."/>
            <person name="Wang D.-D."/>
            <person name="Ding L.-L."/>
            <person name="Zou L.-W."/>
            <person name="Yu Y."/>
            <person name="Chen J."/>
            <person name="Tang H."/>
            <person name="Ge G.-B."/>
        </authorList>
    </citation>
    <scope>BIOTECHNOLOGY</scope>
</reference>
<reference key="3">
    <citation type="journal article" date="2019" name="Nat. Prod. Rep.">
        <title>Non-volatile natural products in plant glandular trichomes: chemistry, biological activities and biosynthesis.</title>
        <authorList>
            <person name="Liu Y."/>
            <person name="Jing S.-X."/>
            <person name="Luo S.-H."/>
            <person name="Li S.-H."/>
        </authorList>
    </citation>
    <scope>PATHWAY</scope>
    <scope>REVIEW</scope>
</reference>
<protein>
    <recommendedName>
        <fullName evidence="5">Flavonoid 8-O-methyltransferase 1</fullName>
        <shortName evidence="5">ObF8OMT-1</shortName>
        <ecNumber evidence="1 3">2.1.1.-</ecNumber>
    </recommendedName>
    <alternativeName>
        <fullName evidence="7">8-hydroxysalvigenin 8-O-methyltransferase</fullName>
        <ecNumber evidence="7">2.1.1.-</ecNumber>
    </alternativeName>
    <alternativeName>
        <fullName evidence="7">Pilosin 8-O-methyltransferase</fullName>
        <ecNumber evidence="7">2.1.1.-</ecNumber>
    </alternativeName>
</protein>